<accession>Q64105</accession>
<accession>Q63996</accession>
<protein>
    <recommendedName>
        <fullName>Sepiapterin reductase</fullName>
        <shortName>SPR</shortName>
        <ecNumber>1.1.1.153</ecNumber>
    </recommendedName>
</protein>
<dbReference type="EC" id="1.1.1.153"/>
<dbReference type="EMBL" id="S77493">
    <property type="protein sequence ID" value="AAB33611.1"/>
    <property type="molecule type" value="mRNA"/>
</dbReference>
<dbReference type="EMBL" id="U78077">
    <property type="protein sequence ID" value="AAC69364.1"/>
    <property type="molecule type" value="Genomic_DNA"/>
</dbReference>
<dbReference type="EMBL" id="U78076">
    <property type="protein sequence ID" value="AAC69364.1"/>
    <property type="status" value="JOINED"/>
    <property type="molecule type" value="Genomic_DNA"/>
</dbReference>
<dbReference type="EMBL" id="S71375">
    <property type="status" value="NOT_ANNOTATED_CDS"/>
    <property type="molecule type" value="mRNA"/>
</dbReference>
<dbReference type="PIR" id="S52110">
    <property type="entry name" value="S52110"/>
</dbReference>
<dbReference type="PDB" id="1NAS">
    <property type="method" value="X-ray"/>
    <property type="resolution" value="2.10 A"/>
    <property type="chains" value="A=3-261"/>
</dbReference>
<dbReference type="PDB" id="1OAA">
    <property type="method" value="X-ray"/>
    <property type="resolution" value="1.25 A"/>
    <property type="chains" value="A=3-261"/>
</dbReference>
<dbReference type="PDB" id="1SEP">
    <property type="method" value="X-ray"/>
    <property type="resolution" value="1.95 A"/>
    <property type="chains" value="A=1-261"/>
</dbReference>
<dbReference type="PDBsum" id="1NAS"/>
<dbReference type="PDBsum" id="1OAA"/>
<dbReference type="PDBsum" id="1SEP"/>
<dbReference type="SMR" id="Q64105"/>
<dbReference type="FunCoup" id="Q64105">
    <property type="interactions" value="1164"/>
</dbReference>
<dbReference type="IntAct" id="Q64105">
    <property type="interactions" value="2"/>
</dbReference>
<dbReference type="MINT" id="Q64105"/>
<dbReference type="STRING" id="10090.ENSMUSP00000048111"/>
<dbReference type="GlyGen" id="Q64105">
    <property type="glycosylation" value="2 sites, 1 N-linked glycan (1 site), 1 O-linked glycan (1 site)"/>
</dbReference>
<dbReference type="iPTMnet" id="Q64105"/>
<dbReference type="PhosphoSitePlus" id="Q64105"/>
<dbReference type="SwissPalm" id="Q64105"/>
<dbReference type="REPRODUCTION-2DPAGE" id="Q64105"/>
<dbReference type="jPOST" id="Q64105"/>
<dbReference type="PaxDb" id="10090-ENSMUSP00000048111"/>
<dbReference type="PeptideAtlas" id="Q64105"/>
<dbReference type="ProteomicsDB" id="261631"/>
<dbReference type="Pumba" id="Q64105"/>
<dbReference type="AGR" id="MGI:103078"/>
<dbReference type="MGI" id="MGI:103078">
    <property type="gene designation" value="Spr"/>
</dbReference>
<dbReference type="eggNOG" id="KOG1204">
    <property type="taxonomic scope" value="Eukaryota"/>
</dbReference>
<dbReference type="InParanoid" id="Q64105"/>
<dbReference type="BRENDA" id="1.1.1.153">
    <property type="organism ID" value="3474"/>
</dbReference>
<dbReference type="Reactome" id="R-MMU-1474151">
    <property type="pathway name" value="Tetrahydrobiopterin (BH4) synthesis, recycling, salvage and regulation"/>
</dbReference>
<dbReference type="Reactome" id="R-MMU-203615">
    <property type="pathway name" value="eNOS activation"/>
</dbReference>
<dbReference type="ChiTaRS" id="Spr">
    <property type="organism name" value="mouse"/>
</dbReference>
<dbReference type="EvolutionaryTrace" id="Q64105"/>
<dbReference type="PRO" id="PR:Q64105"/>
<dbReference type="Proteomes" id="UP000000589">
    <property type="component" value="Unplaced"/>
</dbReference>
<dbReference type="RNAct" id="Q64105">
    <property type="molecule type" value="protein"/>
</dbReference>
<dbReference type="GO" id="GO:0005829">
    <property type="term" value="C:cytosol"/>
    <property type="evidence" value="ECO:0000314"/>
    <property type="project" value="MGI"/>
</dbReference>
<dbReference type="GO" id="GO:0005739">
    <property type="term" value="C:mitochondrion"/>
    <property type="evidence" value="ECO:0007005"/>
    <property type="project" value="MGI"/>
</dbReference>
<dbReference type="GO" id="GO:0042803">
    <property type="term" value="F:protein homodimerization activity"/>
    <property type="evidence" value="ECO:0000353"/>
    <property type="project" value="UniProtKB"/>
</dbReference>
<dbReference type="GO" id="GO:0004757">
    <property type="term" value="F:sepiapterin reductase (NADP+) activity"/>
    <property type="evidence" value="ECO:0000314"/>
    <property type="project" value="MGI"/>
</dbReference>
<dbReference type="GO" id="GO:0048667">
    <property type="term" value="P:cell morphogenesis involved in neuron differentiation"/>
    <property type="evidence" value="ECO:0000315"/>
    <property type="project" value="MGI"/>
</dbReference>
<dbReference type="GO" id="GO:0042417">
    <property type="term" value="P:dopamine metabolic process"/>
    <property type="evidence" value="ECO:0000315"/>
    <property type="project" value="MGI"/>
</dbReference>
<dbReference type="GO" id="GO:0006558">
    <property type="term" value="P:L-phenylalanine metabolic process"/>
    <property type="evidence" value="ECO:0000315"/>
    <property type="project" value="MGI"/>
</dbReference>
<dbReference type="GO" id="GO:0042415">
    <property type="term" value="P:norepinephrine metabolic process"/>
    <property type="evidence" value="ECO:0000315"/>
    <property type="project" value="MGI"/>
</dbReference>
<dbReference type="GO" id="GO:0019889">
    <property type="term" value="P:pteridine metabolic process"/>
    <property type="evidence" value="ECO:0000315"/>
    <property type="project" value="MGI"/>
</dbReference>
<dbReference type="GO" id="GO:0040014">
    <property type="term" value="P:regulation of multicellular organism growth"/>
    <property type="evidence" value="ECO:0000315"/>
    <property type="project" value="MGI"/>
</dbReference>
<dbReference type="GO" id="GO:0042428">
    <property type="term" value="P:serotonin metabolic process"/>
    <property type="evidence" value="ECO:0000315"/>
    <property type="project" value="MGI"/>
</dbReference>
<dbReference type="GO" id="GO:0006729">
    <property type="term" value="P:tetrahydrobiopterin biosynthetic process"/>
    <property type="evidence" value="ECO:0000314"/>
    <property type="project" value="MGI"/>
</dbReference>
<dbReference type="GO" id="GO:0046146">
    <property type="term" value="P:tetrahydrobiopterin metabolic process"/>
    <property type="evidence" value="ECO:0000315"/>
    <property type="project" value="MGI"/>
</dbReference>
<dbReference type="GO" id="GO:0050882">
    <property type="term" value="P:voluntary musculoskeletal movement"/>
    <property type="evidence" value="ECO:0000315"/>
    <property type="project" value="MGI"/>
</dbReference>
<dbReference type="CDD" id="cd05367">
    <property type="entry name" value="SPR-like_SDR_c"/>
    <property type="match status" value="1"/>
</dbReference>
<dbReference type="FunFam" id="3.40.50.720:FF:000259">
    <property type="entry name" value="Sepiapterin reductase"/>
    <property type="match status" value="1"/>
</dbReference>
<dbReference type="Gene3D" id="3.40.50.720">
    <property type="entry name" value="NAD(P)-binding Rossmann-like Domain"/>
    <property type="match status" value="1"/>
</dbReference>
<dbReference type="InterPro" id="IPR051721">
    <property type="entry name" value="Biopterin_syn/organic_redct"/>
</dbReference>
<dbReference type="InterPro" id="IPR036291">
    <property type="entry name" value="NAD(P)-bd_dom_sf"/>
</dbReference>
<dbReference type="InterPro" id="IPR002347">
    <property type="entry name" value="SDR_fam"/>
</dbReference>
<dbReference type="InterPro" id="IPR006393">
    <property type="entry name" value="Sepiapterin_red"/>
</dbReference>
<dbReference type="NCBIfam" id="TIGR01500">
    <property type="entry name" value="sepiapter_red"/>
    <property type="match status" value="1"/>
</dbReference>
<dbReference type="PANTHER" id="PTHR44085">
    <property type="entry name" value="SEPIAPTERIN REDUCTASE"/>
    <property type="match status" value="1"/>
</dbReference>
<dbReference type="PANTHER" id="PTHR44085:SF2">
    <property type="entry name" value="SEPIAPTERIN REDUCTASE"/>
    <property type="match status" value="1"/>
</dbReference>
<dbReference type="Pfam" id="PF00106">
    <property type="entry name" value="adh_short"/>
    <property type="match status" value="1"/>
</dbReference>
<dbReference type="PRINTS" id="PR00081">
    <property type="entry name" value="GDHRDH"/>
</dbReference>
<dbReference type="SUPFAM" id="SSF51735">
    <property type="entry name" value="NAD(P)-binding Rossmann-fold domains"/>
    <property type="match status" value="1"/>
</dbReference>
<gene>
    <name type="primary">Spr</name>
</gene>
<proteinExistence type="evidence at protein level"/>
<name>SPRE_MOUSE</name>
<keyword id="KW-0002">3D-structure</keyword>
<keyword id="KW-0007">Acetylation</keyword>
<keyword id="KW-0963">Cytoplasm</keyword>
<keyword id="KW-0521">NADP</keyword>
<keyword id="KW-0560">Oxidoreductase</keyword>
<keyword id="KW-0597">Phosphoprotein</keyword>
<keyword id="KW-1185">Reference proteome</keyword>
<reference key="1">
    <citation type="journal article" date="1995" name="Biochim. Biophys. Acta">
        <title>Mouse sepiapterin reductase: an enzyme involved in the final step of tetrahydrobiopterin biosynthesis. Primary structure deduced from the cDNA sequence.</title>
        <authorList>
            <person name="Ota A."/>
            <person name="Ichinose H."/>
            <person name="Nagatsu T."/>
        </authorList>
    </citation>
    <scope>NUCLEOTIDE SEQUENCE [MRNA]</scope>
</reference>
<reference key="2">
    <citation type="journal article" date="1999" name="Biochim. Biophys. Acta">
        <title>Cloning of mouse sepiapterin reductase gene and characterization of its promoter region.</title>
        <authorList>
            <person name="Lee S.W."/>
            <person name="Park I.Y."/>
            <person name="Hahn Y."/>
            <person name="Lee J.E."/>
            <person name="Seong C.S."/>
            <person name="Chung J.H."/>
            <person name="Park Y.S."/>
        </authorList>
    </citation>
    <scope>NUCLEOTIDE SEQUENCE [GENOMIC DNA]</scope>
    <source>
        <strain>129</strain>
    </source>
</reference>
<reference key="3">
    <citation type="journal article" date="1993" name="Adv. Exp. Med. Biol.">
        <title>Northern blot analysis of sepiapterin reductase mRNA in mammalian cell lines and tissues.</title>
        <authorList>
            <person name="Maier J."/>
            <person name="Schott K."/>
            <person name="Werner T."/>
            <person name="Bacher A."/>
            <person name="Ziegler I."/>
        </authorList>
    </citation>
    <scope>NUCLEOTIDE SEQUENCE [MRNA] OF 209-261</scope>
</reference>
<reference key="4">
    <citation type="journal article" date="1993" name="Exp. Cell Res.">
        <title>Detection of a novel sepiapterin reductase mRNA: assay of mRNA in various cells and tissues of various species.</title>
        <authorList>
            <person name="Maier J."/>
            <person name="Schott K."/>
            <person name="Werner T."/>
            <person name="Bacher A."/>
            <person name="Ziegler I."/>
        </authorList>
    </citation>
    <scope>NUCLEOTIDE SEQUENCE [MRNA] OF 209-255</scope>
</reference>
<reference key="5">
    <citation type="journal article" date="2010" name="Cell">
        <title>A tissue-specific atlas of mouse protein phosphorylation and expression.</title>
        <authorList>
            <person name="Huttlin E.L."/>
            <person name="Jedrychowski M.P."/>
            <person name="Elias J.E."/>
            <person name="Goswami T."/>
            <person name="Rad R."/>
            <person name="Beausoleil S.A."/>
            <person name="Villen J."/>
            <person name="Haas W."/>
            <person name="Sowa M.E."/>
            <person name="Gygi S.P."/>
        </authorList>
    </citation>
    <scope>IDENTIFICATION BY MASS SPECTROMETRY [LARGE SCALE ANALYSIS]</scope>
    <source>
        <tissue>Brain</tissue>
        <tissue>Brown adipose tissue</tissue>
        <tissue>Heart</tissue>
        <tissue>Kidney</tissue>
        <tissue>Liver</tissue>
        <tissue>Lung</tissue>
        <tissue>Pancreas</tissue>
        <tissue>Spleen</tissue>
        <tissue>Testis</tissue>
    </source>
</reference>
<reference key="6">
    <citation type="journal article" date="1997" name="EMBO J.">
        <title>The 1.25-A crystal structure of sepiapterin reductase reveals its binding mode to pterins and brain neurotransmitters.</title>
        <authorList>
            <person name="Auerbach G."/>
            <person name="Herrmann A."/>
            <person name="Gutlich M."/>
            <person name="Fischer M."/>
            <person name="Jacob U."/>
            <person name="Bacher A."/>
            <person name="Huber R."/>
        </authorList>
    </citation>
    <scope>X-RAY CRYSTALLOGRAPHY (1.25 ANGSTROMS) IN COMPLEXES WITH PTERIN; N-ACETYL SEROTONIN AND NADP</scope>
    <scope>ENZYME MECHANISM</scope>
    <scope>SUBUNIT</scope>
</reference>
<sequence>MEADGLGCAVCVLTGASRGFGRALAPQLARLLSPGSVMLVSARSESMLRQLKEELGAQQPDLKVVLAAADLGTEAGVQRLLSAVRELPRPEGLQRLLLINNAATLGDVSKGFLNVNDLAEVNNYWALNLTSMLCLTSGTLNAFQDSPGLSKTVVNISSLCALQPYKGWGLYCAGKAARDMLYQVLAAEEPSVRVLSYAPGPLDNDMQQLARETSKDPELRSKLQKLKSDGALVDCGTSAQKLLGLLQKDTFQSGAHVDFYD</sequence>
<organism>
    <name type="scientific">Mus musculus</name>
    <name type="common">Mouse</name>
    <dbReference type="NCBI Taxonomy" id="10090"/>
    <lineage>
        <taxon>Eukaryota</taxon>
        <taxon>Metazoa</taxon>
        <taxon>Chordata</taxon>
        <taxon>Craniata</taxon>
        <taxon>Vertebrata</taxon>
        <taxon>Euteleostomi</taxon>
        <taxon>Mammalia</taxon>
        <taxon>Eutheria</taxon>
        <taxon>Euarchontoglires</taxon>
        <taxon>Glires</taxon>
        <taxon>Rodentia</taxon>
        <taxon>Myomorpha</taxon>
        <taxon>Muroidea</taxon>
        <taxon>Muridae</taxon>
        <taxon>Murinae</taxon>
        <taxon>Mus</taxon>
        <taxon>Mus</taxon>
    </lineage>
</organism>
<comment type="function">
    <text>Catalyzes the final one or two reductions in tetra-hydrobiopterin biosynthesis to form 5,6,7,8-tetrahydrobiopterin.</text>
</comment>
<comment type="catalytic activity">
    <reaction>
        <text>L-erythro-7,8-dihydrobiopterin + NADP(+) = L-sepiapterin + NADPH + H(+)</text>
        <dbReference type="Rhea" id="RHEA:18953"/>
        <dbReference type="ChEBI" id="CHEBI:15378"/>
        <dbReference type="ChEBI" id="CHEBI:43029"/>
        <dbReference type="ChEBI" id="CHEBI:57783"/>
        <dbReference type="ChEBI" id="CHEBI:58349"/>
        <dbReference type="ChEBI" id="CHEBI:194527"/>
        <dbReference type="EC" id="1.1.1.153"/>
    </reaction>
</comment>
<comment type="catalytic activity">
    <reaction>
        <text>(6R)-L-erythro-5,6,7,8-tetrahydrobiopterin + 2 NADP(+) = 6-pyruvoyl-5,6,7,8-tetrahydropterin + 2 NADPH + 2 H(+)</text>
        <dbReference type="Rhea" id="RHEA:32627"/>
        <dbReference type="ChEBI" id="CHEBI:15378"/>
        <dbReference type="ChEBI" id="CHEBI:57783"/>
        <dbReference type="ChEBI" id="CHEBI:58349"/>
        <dbReference type="ChEBI" id="CHEBI:59560"/>
        <dbReference type="ChEBI" id="CHEBI:136564"/>
        <dbReference type="EC" id="1.1.1.153"/>
    </reaction>
</comment>
<comment type="subunit">
    <text evidence="3">Homodimer.</text>
</comment>
<comment type="subcellular location">
    <subcellularLocation>
        <location>Cytoplasm</location>
    </subcellularLocation>
</comment>
<comment type="similarity">
    <text evidence="4">Belongs to the sepiapterin reductase family.</text>
</comment>
<evidence type="ECO:0000250" key="1">
    <source>
        <dbReference type="UniProtKB" id="P18297"/>
    </source>
</evidence>
<evidence type="ECO:0000250" key="2">
    <source>
        <dbReference type="UniProtKB" id="P35270"/>
    </source>
</evidence>
<evidence type="ECO:0000269" key="3">
    <source>
    </source>
</evidence>
<evidence type="ECO:0000305" key="4"/>
<evidence type="ECO:0007829" key="5">
    <source>
        <dbReference type="PDB" id="1OAA"/>
    </source>
</evidence>
<feature type="chain" id="PRO_0000072150" description="Sepiapterin reductase">
    <location>
        <begin position="1"/>
        <end position="261"/>
    </location>
</feature>
<feature type="binding site">
    <location>
        <begin position="15"/>
        <end position="21"/>
    </location>
    <ligand>
        <name>NADP(+)</name>
        <dbReference type="ChEBI" id="CHEBI:58349"/>
    </ligand>
</feature>
<feature type="binding site">
    <location>
        <begin position="43"/>
        <end position="44"/>
    </location>
    <ligand>
        <name>NADP(+)</name>
        <dbReference type="ChEBI" id="CHEBI:58349"/>
    </ligand>
</feature>
<feature type="binding site">
    <location>
        <begin position="70"/>
        <end position="71"/>
    </location>
    <ligand>
        <name>NADP(+)</name>
        <dbReference type="ChEBI" id="CHEBI:58349"/>
    </ligand>
</feature>
<feature type="binding site">
    <location>
        <begin position="158"/>
        <end position="159"/>
    </location>
    <ligand>
        <name>substrate</name>
    </ligand>
</feature>
<feature type="binding site">
    <location>
        <position position="171"/>
    </location>
    <ligand>
        <name>substrate</name>
    </ligand>
</feature>
<feature type="binding site">
    <location>
        <position position="175"/>
    </location>
    <ligand>
        <name>NADP(+)</name>
        <dbReference type="ChEBI" id="CHEBI:58349"/>
    </ligand>
</feature>
<feature type="binding site">
    <location>
        <position position="200"/>
    </location>
    <ligand>
        <name>substrate</name>
    </ligand>
</feature>
<feature type="binding site">
    <location>
        <begin position="202"/>
        <end position="207"/>
    </location>
    <ligand>
        <name>NADP(+)</name>
        <dbReference type="ChEBI" id="CHEBI:58349"/>
    </ligand>
</feature>
<feature type="binding site">
    <location>
        <position position="222"/>
    </location>
    <ligand>
        <name>substrate</name>
    </ligand>
</feature>
<feature type="binding site">
    <location>
        <position position="258"/>
    </location>
    <ligand>
        <name>substrate</name>
    </ligand>
</feature>
<feature type="modified residue" description="N-acetylmethionine" evidence="1">
    <location>
        <position position="1"/>
    </location>
</feature>
<feature type="modified residue" description="Phosphoserine" evidence="1">
    <location>
        <position position="33"/>
    </location>
</feature>
<feature type="modified residue" description="Phosphoserine" evidence="1">
    <location>
        <position position="46"/>
    </location>
</feature>
<feature type="modified residue" description="Phosphoserine" evidence="1">
    <location>
        <position position="196"/>
    </location>
</feature>
<feature type="modified residue" description="Phosphoserine" evidence="2">
    <location>
        <position position="214"/>
    </location>
</feature>
<feature type="sequence conflict" description="In Ref. 2; AAC69364." evidence="4" ref="2">
    <original>D</original>
    <variation>G</variation>
    <location>
        <position position="4"/>
    </location>
</feature>
<feature type="strand" evidence="5">
    <location>
        <begin position="7"/>
        <end position="15"/>
    </location>
</feature>
<feature type="helix" evidence="5">
    <location>
        <begin position="19"/>
        <end position="29"/>
    </location>
</feature>
<feature type="strand" evidence="5">
    <location>
        <begin position="37"/>
        <end position="43"/>
    </location>
</feature>
<feature type="helix" evidence="5">
    <location>
        <begin position="45"/>
        <end position="58"/>
    </location>
</feature>
<feature type="strand" evidence="5">
    <location>
        <begin position="62"/>
        <end position="68"/>
    </location>
</feature>
<feature type="helix" evidence="5">
    <location>
        <begin position="74"/>
        <end position="86"/>
    </location>
</feature>
<feature type="strand" evidence="5">
    <location>
        <begin position="95"/>
        <end position="100"/>
    </location>
</feature>
<feature type="helix" evidence="5">
    <location>
        <begin position="112"/>
        <end position="114"/>
    </location>
</feature>
<feature type="helix" evidence="5">
    <location>
        <begin position="118"/>
        <end position="128"/>
    </location>
</feature>
<feature type="helix" evidence="5">
    <location>
        <begin position="130"/>
        <end position="141"/>
    </location>
</feature>
<feature type="strand" evidence="5">
    <location>
        <begin position="150"/>
        <end position="156"/>
    </location>
</feature>
<feature type="helix" evidence="5">
    <location>
        <begin position="159"/>
        <end position="161"/>
    </location>
</feature>
<feature type="helix" evidence="5">
    <location>
        <begin position="169"/>
        <end position="188"/>
    </location>
</feature>
<feature type="strand" evidence="5">
    <location>
        <begin position="192"/>
        <end position="198"/>
    </location>
</feature>
<feature type="strand" evidence="5">
    <location>
        <begin position="201"/>
        <end position="204"/>
    </location>
</feature>
<feature type="helix" evidence="5">
    <location>
        <begin position="205"/>
        <end position="213"/>
    </location>
</feature>
<feature type="helix" evidence="5">
    <location>
        <begin position="217"/>
        <end position="228"/>
    </location>
</feature>
<feature type="helix" evidence="5">
    <location>
        <begin position="235"/>
        <end position="248"/>
    </location>
</feature>
<feature type="strand" evidence="5">
    <location>
        <begin position="255"/>
        <end position="258"/>
    </location>
</feature>